<accession>B5BJJ8</accession>
<name>TPIS_SALPK</name>
<protein>
    <recommendedName>
        <fullName evidence="1">Triosephosphate isomerase</fullName>
        <shortName evidence="1">TIM</shortName>
        <shortName evidence="1">TPI</shortName>
        <ecNumber evidence="1">5.3.1.1</ecNumber>
    </recommendedName>
    <alternativeName>
        <fullName evidence="1">Triose-phosphate isomerase</fullName>
    </alternativeName>
</protein>
<gene>
    <name evidence="1" type="primary">tpiA</name>
    <name type="ordered locus">SSPA3652</name>
</gene>
<comment type="function">
    <text evidence="1">Involved in the gluconeogenesis. Catalyzes stereospecifically the conversion of dihydroxyacetone phosphate (DHAP) to D-glyceraldehyde-3-phosphate (G3P).</text>
</comment>
<comment type="catalytic activity">
    <reaction evidence="1">
        <text>D-glyceraldehyde 3-phosphate = dihydroxyacetone phosphate</text>
        <dbReference type="Rhea" id="RHEA:18585"/>
        <dbReference type="ChEBI" id="CHEBI:57642"/>
        <dbReference type="ChEBI" id="CHEBI:59776"/>
        <dbReference type="EC" id="5.3.1.1"/>
    </reaction>
</comment>
<comment type="pathway">
    <text evidence="1">Carbohydrate biosynthesis; gluconeogenesis.</text>
</comment>
<comment type="pathway">
    <text evidence="1">Carbohydrate degradation; glycolysis; D-glyceraldehyde 3-phosphate from glycerone phosphate: step 1/1.</text>
</comment>
<comment type="subunit">
    <text evidence="1">Homodimer.</text>
</comment>
<comment type="subcellular location">
    <subcellularLocation>
        <location evidence="1">Cytoplasm</location>
    </subcellularLocation>
</comment>
<comment type="similarity">
    <text evidence="1">Belongs to the triosephosphate isomerase family.</text>
</comment>
<sequence>MRHPLVMGNWKLNGSRHMVNELVANLRKELAGVAGCDVAIAPPEMYIDLAKRAAAGSHIMLGAQNVDLNLSGAFTGETSAEMLKDIGAQYIIIGHSERRTYHKESDELIAKKFAVLKEQGLTPVLCIGETEAENEAGKTEEVCARQIDAVLKTQGAAAFEGAVIAYEPVWAIGTGKSATPAQAQAVHKFIRDHIAKADAKIAEQVIIQYGGSVNASNAAELFAQPDIDGALVGGASLKADAFAVIVKAAEAAKQA</sequence>
<organism>
    <name type="scientific">Salmonella paratyphi A (strain AKU_12601)</name>
    <dbReference type="NCBI Taxonomy" id="554290"/>
    <lineage>
        <taxon>Bacteria</taxon>
        <taxon>Pseudomonadati</taxon>
        <taxon>Pseudomonadota</taxon>
        <taxon>Gammaproteobacteria</taxon>
        <taxon>Enterobacterales</taxon>
        <taxon>Enterobacteriaceae</taxon>
        <taxon>Salmonella</taxon>
    </lineage>
</organism>
<dbReference type="EC" id="5.3.1.1" evidence="1"/>
<dbReference type="EMBL" id="FM200053">
    <property type="protein sequence ID" value="CAR61933.1"/>
    <property type="molecule type" value="Genomic_DNA"/>
</dbReference>
<dbReference type="RefSeq" id="WP_001216335.1">
    <property type="nucleotide sequence ID" value="NC_011147.1"/>
</dbReference>
<dbReference type="SMR" id="B5BJJ8"/>
<dbReference type="KEGG" id="sek:SSPA3652"/>
<dbReference type="HOGENOM" id="CLU_024251_2_1_6"/>
<dbReference type="UniPathway" id="UPA00109">
    <property type="reaction ID" value="UER00189"/>
</dbReference>
<dbReference type="UniPathway" id="UPA00138"/>
<dbReference type="Proteomes" id="UP000001869">
    <property type="component" value="Chromosome"/>
</dbReference>
<dbReference type="GO" id="GO:0005829">
    <property type="term" value="C:cytosol"/>
    <property type="evidence" value="ECO:0007669"/>
    <property type="project" value="TreeGrafter"/>
</dbReference>
<dbReference type="GO" id="GO:0004807">
    <property type="term" value="F:triose-phosphate isomerase activity"/>
    <property type="evidence" value="ECO:0007669"/>
    <property type="project" value="UniProtKB-UniRule"/>
</dbReference>
<dbReference type="GO" id="GO:0006094">
    <property type="term" value="P:gluconeogenesis"/>
    <property type="evidence" value="ECO:0007669"/>
    <property type="project" value="UniProtKB-UniRule"/>
</dbReference>
<dbReference type="GO" id="GO:0046166">
    <property type="term" value="P:glyceraldehyde-3-phosphate biosynthetic process"/>
    <property type="evidence" value="ECO:0007669"/>
    <property type="project" value="TreeGrafter"/>
</dbReference>
<dbReference type="GO" id="GO:0019563">
    <property type="term" value="P:glycerol catabolic process"/>
    <property type="evidence" value="ECO:0007669"/>
    <property type="project" value="TreeGrafter"/>
</dbReference>
<dbReference type="GO" id="GO:0006096">
    <property type="term" value="P:glycolytic process"/>
    <property type="evidence" value="ECO:0007669"/>
    <property type="project" value="UniProtKB-UniRule"/>
</dbReference>
<dbReference type="CDD" id="cd00311">
    <property type="entry name" value="TIM"/>
    <property type="match status" value="1"/>
</dbReference>
<dbReference type="FunFam" id="3.20.20.70:FF:000020">
    <property type="entry name" value="Triosephosphate isomerase"/>
    <property type="match status" value="1"/>
</dbReference>
<dbReference type="Gene3D" id="3.20.20.70">
    <property type="entry name" value="Aldolase class I"/>
    <property type="match status" value="1"/>
</dbReference>
<dbReference type="HAMAP" id="MF_00147_B">
    <property type="entry name" value="TIM_B"/>
    <property type="match status" value="1"/>
</dbReference>
<dbReference type="InterPro" id="IPR013785">
    <property type="entry name" value="Aldolase_TIM"/>
</dbReference>
<dbReference type="InterPro" id="IPR035990">
    <property type="entry name" value="TIM_sf"/>
</dbReference>
<dbReference type="InterPro" id="IPR022896">
    <property type="entry name" value="TrioseP_Isoase_bac/euk"/>
</dbReference>
<dbReference type="InterPro" id="IPR000652">
    <property type="entry name" value="Triosephosphate_isomerase"/>
</dbReference>
<dbReference type="InterPro" id="IPR020861">
    <property type="entry name" value="Triosephosphate_isomerase_AS"/>
</dbReference>
<dbReference type="NCBIfam" id="TIGR00419">
    <property type="entry name" value="tim"/>
    <property type="match status" value="1"/>
</dbReference>
<dbReference type="PANTHER" id="PTHR21139">
    <property type="entry name" value="TRIOSEPHOSPHATE ISOMERASE"/>
    <property type="match status" value="1"/>
</dbReference>
<dbReference type="PANTHER" id="PTHR21139:SF42">
    <property type="entry name" value="TRIOSEPHOSPHATE ISOMERASE"/>
    <property type="match status" value="1"/>
</dbReference>
<dbReference type="Pfam" id="PF00121">
    <property type="entry name" value="TIM"/>
    <property type="match status" value="1"/>
</dbReference>
<dbReference type="SUPFAM" id="SSF51351">
    <property type="entry name" value="Triosephosphate isomerase (TIM)"/>
    <property type="match status" value="1"/>
</dbReference>
<dbReference type="PROSITE" id="PS00171">
    <property type="entry name" value="TIM_1"/>
    <property type="match status" value="1"/>
</dbReference>
<dbReference type="PROSITE" id="PS51440">
    <property type="entry name" value="TIM_2"/>
    <property type="match status" value="1"/>
</dbReference>
<feature type="chain" id="PRO_1000096531" description="Triosephosphate isomerase">
    <location>
        <begin position="1"/>
        <end position="255"/>
    </location>
</feature>
<feature type="active site" description="Electrophile" evidence="1">
    <location>
        <position position="95"/>
    </location>
</feature>
<feature type="active site" description="Proton acceptor" evidence="1">
    <location>
        <position position="167"/>
    </location>
</feature>
<feature type="binding site" evidence="1">
    <location>
        <begin position="9"/>
        <end position="11"/>
    </location>
    <ligand>
        <name>substrate</name>
    </ligand>
</feature>
<feature type="binding site" evidence="1">
    <location>
        <position position="173"/>
    </location>
    <ligand>
        <name>substrate</name>
    </ligand>
</feature>
<feature type="binding site" evidence="1">
    <location>
        <position position="212"/>
    </location>
    <ligand>
        <name>substrate</name>
    </ligand>
</feature>
<feature type="binding site" evidence="1">
    <location>
        <begin position="233"/>
        <end position="234"/>
    </location>
    <ligand>
        <name>substrate</name>
    </ligand>
</feature>
<proteinExistence type="inferred from homology"/>
<keyword id="KW-0963">Cytoplasm</keyword>
<keyword id="KW-0312">Gluconeogenesis</keyword>
<keyword id="KW-0324">Glycolysis</keyword>
<keyword id="KW-0413">Isomerase</keyword>
<evidence type="ECO:0000255" key="1">
    <source>
        <dbReference type="HAMAP-Rule" id="MF_00147"/>
    </source>
</evidence>
<reference key="1">
    <citation type="journal article" date="2009" name="BMC Genomics">
        <title>Pseudogene accumulation in the evolutionary histories of Salmonella enterica serovars Paratyphi A and Typhi.</title>
        <authorList>
            <person name="Holt K.E."/>
            <person name="Thomson N.R."/>
            <person name="Wain J."/>
            <person name="Langridge G.C."/>
            <person name="Hasan R."/>
            <person name="Bhutta Z.A."/>
            <person name="Quail M.A."/>
            <person name="Norbertczak H."/>
            <person name="Walker D."/>
            <person name="Simmonds M."/>
            <person name="White B."/>
            <person name="Bason N."/>
            <person name="Mungall K."/>
            <person name="Dougan G."/>
            <person name="Parkhill J."/>
        </authorList>
    </citation>
    <scope>NUCLEOTIDE SEQUENCE [LARGE SCALE GENOMIC DNA]</scope>
    <source>
        <strain>AKU_12601</strain>
    </source>
</reference>